<evidence type="ECO:0000255" key="1">
    <source>
        <dbReference type="HAMAP-Rule" id="MF_01540"/>
    </source>
</evidence>
<evidence type="ECO:0000256" key="2">
    <source>
        <dbReference type="SAM" id="MobiDB-lite"/>
    </source>
</evidence>
<dbReference type="EC" id="1.8.1.2" evidence="1"/>
<dbReference type="EMBL" id="CP001298">
    <property type="protein sequence ID" value="ACK83355.1"/>
    <property type="molecule type" value="Genomic_DNA"/>
</dbReference>
<dbReference type="RefSeq" id="WP_015950912.1">
    <property type="nucleotide sequence ID" value="NC_011757.1"/>
</dbReference>
<dbReference type="SMR" id="B7L0Y4"/>
<dbReference type="KEGG" id="mch:Mchl_2513"/>
<dbReference type="HOGENOM" id="CLU_001975_3_2_5"/>
<dbReference type="UniPathway" id="UPA00140">
    <property type="reaction ID" value="UER00207"/>
</dbReference>
<dbReference type="Proteomes" id="UP000002385">
    <property type="component" value="Chromosome"/>
</dbReference>
<dbReference type="GO" id="GO:0009337">
    <property type="term" value="C:sulfite reductase complex (NADPH)"/>
    <property type="evidence" value="ECO:0007669"/>
    <property type="project" value="InterPro"/>
</dbReference>
<dbReference type="GO" id="GO:0051539">
    <property type="term" value="F:4 iron, 4 sulfur cluster binding"/>
    <property type="evidence" value="ECO:0007669"/>
    <property type="project" value="UniProtKB-KW"/>
</dbReference>
<dbReference type="GO" id="GO:0020037">
    <property type="term" value="F:heme binding"/>
    <property type="evidence" value="ECO:0007669"/>
    <property type="project" value="InterPro"/>
</dbReference>
<dbReference type="GO" id="GO:0046872">
    <property type="term" value="F:metal ion binding"/>
    <property type="evidence" value="ECO:0007669"/>
    <property type="project" value="UniProtKB-KW"/>
</dbReference>
<dbReference type="GO" id="GO:0050661">
    <property type="term" value="F:NADP binding"/>
    <property type="evidence" value="ECO:0007669"/>
    <property type="project" value="InterPro"/>
</dbReference>
<dbReference type="GO" id="GO:0050311">
    <property type="term" value="F:sulfite reductase (ferredoxin) activity"/>
    <property type="evidence" value="ECO:0007669"/>
    <property type="project" value="TreeGrafter"/>
</dbReference>
<dbReference type="GO" id="GO:0004783">
    <property type="term" value="F:sulfite reductase (NADPH) activity"/>
    <property type="evidence" value="ECO:0007669"/>
    <property type="project" value="UniProtKB-UniRule"/>
</dbReference>
<dbReference type="GO" id="GO:0019344">
    <property type="term" value="P:cysteine biosynthetic process"/>
    <property type="evidence" value="ECO:0007669"/>
    <property type="project" value="UniProtKB-KW"/>
</dbReference>
<dbReference type="GO" id="GO:0070814">
    <property type="term" value="P:hydrogen sulfide biosynthetic process"/>
    <property type="evidence" value="ECO:0007669"/>
    <property type="project" value="UniProtKB-UniRule"/>
</dbReference>
<dbReference type="GO" id="GO:0000103">
    <property type="term" value="P:sulfate assimilation"/>
    <property type="evidence" value="ECO:0007669"/>
    <property type="project" value="UniProtKB-UniRule"/>
</dbReference>
<dbReference type="FunFam" id="3.30.413.10:FF:000003">
    <property type="entry name" value="Sulfite reductase [NADPH] hemoprotein beta-component"/>
    <property type="match status" value="1"/>
</dbReference>
<dbReference type="FunFam" id="3.30.413.10:FF:000004">
    <property type="entry name" value="Sulfite reductase [NADPH] hemoprotein beta-component"/>
    <property type="match status" value="1"/>
</dbReference>
<dbReference type="Gene3D" id="3.30.413.10">
    <property type="entry name" value="Sulfite Reductase Hemoprotein, domain 1"/>
    <property type="match status" value="2"/>
</dbReference>
<dbReference type="HAMAP" id="MF_01540">
    <property type="entry name" value="CysI"/>
    <property type="match status" value="1"/>
</dbReference>
<dbReference type="InterPro" id="IPR011786">
    <property type="entry name" value="CysI"/>
</dbReference>
<dbReference type="InterPro" id="IPR005117">
    <property type="entry name" value="NiRdtase/SiRdtase_haem-b_fer"/>
</dbReference>
<dbReference type="InterPro" id="IPR036136">
    <property type="entry name" value="Nit/Sulf_reduc_fer-like_dom_sf"/>
</dbReference>
<dbReference type="InterPro" id="IPR006067">
    <property type="entry name" value="NO2/SO3_Rdtase_4Fe4S_dom"/>
</dbReference>
<dbReference type="InterPro" id="IPR045169">
    <property type="entry name" value="NO2/SO3_Rdtase_4Fe4S_prot"/>
</dbReference>
<dbReference type="InterPro" id="IPR045854">
    <property type="entry name" value="NO2/SO3_Rdtase_4Fe4S_sf"/>
</dbReference>
<dbReference type="InterPro" id="IPR006066">
    <property type="entry name" value="NO2/SO3_Rdtase_FeS/sirohaem_BS"/>
</dbReference>
<dbReference type="NCBIfam" id="TIGR02041">
    <property type="entry name" value="CysI"/>
    <property type="match status" value="1"/>
</dbReference>
<dbReference type="NCBIfam" id="NF010029">
    <property type="entry name" value="PRK13504.1"/>
    <property type="match status" value="1"/>
</dbReference>
<dbReference type="PANTHER" id="PTHR11493:SF47">
    <property type="entry name" value="SULFITE REDUCTASE [NADPH] SUBUNIT BETA"/>
    <property type="match status" value="1"/>
</dbReference>
<dbReference type="PANTHER" id="PTHR11493">
    <property type="entry name" value="SULFITE REDUCTASE [NADPH] SUBUNIT BETA-RELATED"/>
    <property type="match status" value="1"/>
</dbReference>
<dbReference type="Pfam" id="PF01077">
    <property type="entry name" value="NIR_SIR"/>
    <property type="match status" value="1"/>
</dbReference>
<dbReference type="Pfam" id="PF03460">
    <property type="entry name" value="NIR_SIR_ferr"/>
    <property type="match status" value="2"/>
</dbReference>
<dbReference type="PRINTS" id="PR00397">
    <property type="entry name" value="SIROHAEM"/>
</dbReference>
<dbReference type="SUPFAM" id="SSF56014">
    <property type="entry name" value="Nitrite and sulphite reductase 4Fe-4S domain-like"/>
    <property type="match status" value="2"/>
</dbReference>
<dbReference type="SUPFAM" id="SSF55124">
    <property type="entry name" value="Nitrite/Sulfite reductase N-terminal domain-like"/>
    <property type="match status" value="2"/>
</dbReference>
<dbReference type="PROSITE" id="PS00365">
    <property type="entry name" value="NIR_SIR"/>
    <property type="match status" value="1"/>
</dbReference>
<proteinExistence type="inferred from homology"/>
<gene>
    <name evidence="1" type="primary">cysI</name>
    <name type="ordered locus">Mchl_2513</name>
</gene>
<name>CYSI_METC4</name>
<comment type="function">
    <text evidence="1">Component of the sulfite reductase complex that catalyzes the 6-electron reduction of sulfite to sulfide. This is one of several activities required for the biosynthesis of L-cysteine from sulfate.</text>
</comment>
<comment type="catalytic activity">
    <reaction evidence="1">
        <text>hydrogen sulfide + 3 NADP(+) + 3 H2O = sulfite + 3 NADPH + 4 H(+)</text>
        <dbReference type="Rhea" id="RHEA:13801"/>
        <dbReference type="ChEBI" id="CHEBI:15377"/>
        <dbReference type="ChEBI" id="CHEBI:15378"/>
        <dbReference type="ChEBI" id="CHEBI:17359"/>
        <dbReference type="ChEBI" id="CHEBI:29919"/>
        <dbReference type="ChEBI" id="CHEBI:57783"/>
        <dbReference type="ChEBI" id="CHEBI:58349"/>
        <dbReference type="EC" id="1.8.1.2"/>
    </reaction>
</comment>
<comment type="cofactor">
    <cofactor evidence="1">
        <name>siroheme</name>
        <dbReference type="ChEBI" id="CHEBI:60052"/>
    </cofactor>
    <text evidence="1">Binds 1 siroheme per subunit.</text>
</comment>
<comment type="cofactor">
    <cofactor evidence="1">
        <name>[4Fe-4S] cluster</name>
        <dbReference type="ChEBI" id="CHEBI:49883"/>
    </cofactor>
    <text evidence="1">Binds 1 [4Fe-4S] cluster per subunit.</text>
</comment>
<comment type="pathway">
    <text evidence="1">Sulfur metabolism; hydrogen sulfide biosynthesis; hydrogen sulfide from sulfite (NADPH route): step 1/1.</text>
</comment>
<comment type="subunit">
    <text evidence="1">Alpha(8)-beta(8). The alpha component is a flavoprotein, the beta component is a hemoprotein.</text>
</comment>
<comment type="similarity">
    <text evidence="1">Belongs to the nitrite and sulfite reductase 4Fe-4S domain family.</text>
</comment>
<organism>
    <name type="scientific">Methylorubrum extorquens (strain CM4 / NCIMB 13688)</name>
    <name type="common">Methylobacterium extorquens</name>
    <dbReference type="NCBI Taxonomy" id="440085"/>
    <lineage>
        <taxon>Bacteria</taxon>
        <taxon>Pseudomonadati</taxon>
        <taxon>Pseudomonadota</taxon>
        <taxon>Alphaproteobacteria</taxon>
        <taxon>Hyphomicrobiales</taxon>
        <taxon>Methylobacteriaceae</taxon>
        <taxon>Methylorubrum</taxon>
    </lineage>
</organism>
<feature type="chain" id="PRO_0000388493" description="Sulfite reductase [NADPH] hemoprotein beta-component">
    <location>
        <begin position="1"/>
        <end position="612"/>
    </location>
</feature>
<feature type="region of interest" description="Disordered" evidence="2">
    <location>
        <begin position="1"/>
        <end position="26"/>
    </location>
</feature>
<feature type="binding site" evidence="1">
    <location>
        <position position="469"/>
    </location>
    <ligand>
        <name>[4Fe-4S] cluster</name>
        <dbReference type="ChEBI" id="CHEBI:49883"/>
    </ligand>
</feature>
<feature type="binding site" evidence="1">
    <location>
        <position position="475"/>
    </location>
    <ligand>
        <name>[4Fe-4S] cluster</name>
        <dbReference type="ChEBI" id="CHEBI:49883"/>
    </ligand>
</feature>
<feature type="binding site" evidence="1">
    <location>
        <position position="514"/>
    </location>
    <ligand>
        <name>[4Fe-4S] cluster</name>
        <dbReference type="ChEBI" id="CHEBI:49883"/>
    </ligand>
</feature>
<feature type="binding site" evidence="1">
    <location>
        <position position="518"/>
    </location>
    <ligand>
        <name>[4Fe-4S] cluster</name>
        <dbReference type="ChEBI" id="CHEBI:49883"/>
    </ligand>
</feature>
<feature type="binding site" description="axial binding residue" evidence="1">
    <location>
        <position position="518"/>
    </location>
    <ligand>
        <name>siroheme</name>
        <dbReference type="ChEBI" id="CHEBI:60052"/>
    </ligand>
    <ligandPart>
        <name>Fe</name>
        <dbReference type="ChEBI" id="CHEBI:18248"/>
    </ligandPart>
</feature>
<accession>B7L0Y4</accession>
<reference key="1">
    <citation type="submission" date="2008-12" db="EMBL/GenBank/DDBJ databases">
        <title>Complete sequence of chromosome of Methylobacterium chloromethanicum CM4.</title>
        <authorList>
            <consortium name="US DOE Joint Genome Institute"/>
            <person name="Lucas S."/>
            <person name="Copeland A."/>
            <person name="Lapidus A."/>
            <person name="Glavina del Rio T."/>
            <person name="Dalin E."/>
            <person name="Tice H."/>
            <person name="Bruce D."/>
            <person name="Goodwin L."/>
            <person name="Pitluck S."/>
            <person name="Chertkov O."/>
            <person name="Brettin T."/>
            <person name="Detter J.C."/>
            <person name="Han C."/>
            <person name="Larimer F."/>
            <person name="Land M."/>
            <person name="Hauser L."/>
            <person name="Kyrpides N."/>
            <person name="Mikhailova N."/>
            <person name="Marx C."/>
            <person name="Richardson P."/>
        </authorList>
    </citation>
    <scope>NUCLEOTIDE SEQUENCE [LARGE SCALE GENOMIC DNA]</scope>
    <source>
        <strain>CM4 / NCIMB 13688</strain>
    </source>
</reference>
<sequence length="612" mass="66735">MDDHKPIETPDGPAVDTPGIGARRYETPPTELPITEAEAARAAGLAHNEHLKIASGYLRGGLADGLLKHATGAISEDDGQLVKFHGMYMQDDRDIRAERTKKKLEKAYSFMIRLRIAGGVVTPKQWLILDNIATTYAGSALRATTRQTFQYHGVIKSNLKRTMAAIDSALLDTIAACGDVNRNVMAATNPAQAGAHKIALQLAKDISDTLLPKTGAWREIWLDGERVVGGEDAAEVEPVYGKTYLPRKFKTVVAVPPSNEVDIFAHDLGFIAILDKKNRVTGWNVTVGGGMGMTHGEADTFPRTADVLGFVQPEDALKAAEAVMTVQRDWGNRKNRKNARLKYTIERFGLDAFRAEVEKRIGKKLGAPKPFTFDGNGDRYGWVEGDDGRHHLTLYVPSGRIKDIEGGPQFLSGLRRIAEVHEGDFRLTGNQNVIIANVPAGKRAEIDALVDEYGLTRGASALRRNSMACVALPTCGLALAESERYLPDLLSELEESLARHGLQDEPITIRSTGCPNGCARPFISEIGLVGRGPERYHLYLGAAFDGSRLSKLYREDVTASEITGTLDPLFAAYAKDRQPGEHFGDFVIRAGFVAKTSNGPDFHERTGPLRAA</sequence>
<protein>
    <recommendedName>
        <fullName evidence="1">Sulfite reductase [NADPH] hemoprotein beta-component</fullName>
        <shortName evidence="1">SiR-HP</shortName>
        <shortName evidence="1">SiRHP</shortName>
        <ecNumber evidence="1">1.8.1.2</ecNumber>
    </recommendedName>
</protein>
<keyword id="KW-0004">4Fe-4S</keyword>
<keyword id="KW-0028">Amino-acid biosynthesis</keyword>
<keyword id="KW-0198">Cysteine biosynthesis</keyword>
<keyword id="KW-0349">Heme</keyword>
<keyword id="KW-0408">Iron</keyword>
<keyword id="KW-0411">Iron-sulfur</keyword>
<keyword id="KW-0479">Metal-binding</keyword>
<keyword id="KW-0521">NADP</keyword>
<keyword id="KW-0560">Oxidoreductase</keyword>